<keyword id="KW-0378">Hydrolase</keyword>
<keyword id="KW-0511">Multifunctional enzyme</keyword>
<keyword id="KW-0658">Purine biosynthesis</keyword>
<keyword id="KW-0808">Transferase</keyword>
<comment type="catalytic activity">
    <reaction evidence="1">
        <text>(6R)-10-formyltetrahydrofolate + 5-amino-1-(5-phospho-beta-D-ribosyl)imidazole-4-carboxamide = 5-formamido-1-(5-phospho-D-ribosyl)imidazole-4-carboxamide + (6S)-5,6,7,8-tetrahydrofolate</text>
        <dbReference type="Rhea" id="RHEA:22192"/>
        <dbReference type="ChEBI" id="CHEBI:57453"/>
        <dbReference type="ChEBI" id="CHEBI:58467"/>
        <dbReference type="ChEBI" id="CHEBI:58475"/>
        <dbReference type="ChEBI" id="CHEBI:195366"/>
        <dbReference type="EC" id="2.1.2.3"/>
    </reaction>
</comment>
<comment type="catalytic activity">
    <reaction evidence="1">
        <text>IMP + H2O = 5-formamido-1-(5-phospho-D-ribosyl)imidazole-4-carboxamide</text>
        <dbReference type="Rhea" id="RHEA:18445"/>
        <dbReference type="ChEBI" id="CHEBI:15377"/>
        <dbReference type="ChEBI" id="CHEBI:58053"/>
        <dbReference type="ChEBI" id="CHEBI:58467"/>
        <dbReference type="EC" id="3.5.4.10"/>
    </reaction>
</comment>
<comment type="pathway">
    <text evidence="1">Purine metabolism; IMP biosynthesis via de novo pathway; 5-formamido-1-(5-phospho-D-ribosyl)imidazole-4-carboxamide from 5-amino-1-(5-phospho-D-ribosyl)imidazole-4-carboxamide (10-formyl THF route): step 1/1.</text>
</comment>
<comment type="pathway">
    <text evidence="1">Purine metabolism; IMP biosynthesis via de novo pathway; IMP from 5-formamido-1-(5-phospho-D-ribosyl)imidazole-4-carboxamide: step 1/1.</text>
</comment>
<comment type="domain">
    <text evidence="1">The IMP cyclohydrolase activity resides in the N-terminal region.</text>
</comment>
<comment type="similarity">
    <text evidence="1">Belongs to the PurH family.</text>
</comment>
<dbReference type="EC" id="2.1.2.3" evidence="1"/>
<dbReference type="EC" id="3.5.4.10" evidence="1"/>
<dbReference type="EMBL" id="FM211187">
    <property type="protein sequence ID" value="CAR67927.1"/>
    <property type="molecule type" value="Genomic_DNA"/>
</dbReference>
<dbReference type="RefSeq" id="WP_000167083.1">
    <property type="nucleotide sequence ID" value="NC_011900.1"/>
</dbReference>
<dbReference type="SMR" id="B8ZJN3"/>
<dbReference type="KEGG" id="sne:SPN23F00670"/>
<dbReference type="HOGENOM" id="CLU_016316_5_2_9"/>
<dbReference type="UniPathway" id="UPA00074">
    <property type="reaction ID" value="UER00133"/>
</dbReference>
<dbReference type="UniPathway" id="UPA00074">
    <property type="reaction ID" value="UER00135"/>
</dbReference>
<dbReference type="GO" id="GO:0005829">
    <property type="term" value="C:cytosol"/>
    <property type="evidence" value="ECO:0007669"/>
    <property type="project" value="TreeGrafter"/>
</dbReference>
<dbReference type="GO" id="GO:0003937">
    <property type="term" value="F:IMP cyclohydrolase activity"/>
    <property type="evidence" value="ECO:0007669"/>
    <property type="project" value="UniProtKB-UniRule"/>
</dbReference>
<dbReference type="GO" id="GO:0004643">
    <property type="term" value="F:phosphoribosylaminoimidazolecarboxamide formyltransferase activity"/>
    <property type="evidence" value="ECO:0007669"/>
    <property type="project" value="UniProtKB-UniRule"/>
</dbReference>
<dbReference type="GO" id="GO:0006189">
    <property type="term" value="P:'de novo' IMP biosynthetic process"/>
    <property type="evidence" value="ECO:0007669"/>
    <property type="project" value="UniProtKB-UniRule"/>
</dbReference>
<dbReference type="CDD" id="cd01421">
    <property type="entry name" value="IMPCH"/>
    <property type="match status" value="1"/>
</dbReference>
<dbReference type="FunFam" id="3.40.140.20:FF:000001">
    <property type="entry name" value="Bifunctional purine biosynthesis protein PurH"/>
    <property type="match status" value="1"/>
</dbReference>
<dbReference type="FunFam" id="3.40.140.20:FF:000002">
    <property type="entry name" value="Bifunctional purine biosynthesis protein PurH"/>
    <property type="match status" value="1"/>
</dbReference>
<dbReference type="FunFam" id="3.40.50.1380:FF:000001">
    <property type="entry name" value="Bifunctional purine biosynthesis protein PurH"/>
    <property type="match status" value="1"/>
</dbReference>
<dbReference type="Gene3D" id="3.40.140.20">
    <property type="match status" value="2"/>
</dbReference>
<dbReference type="Gene3D" id="3.40.50.1380">
    <property type="entry name" value="Methylglyoxal synthase-like domain"/>
    <property type="match status" value="1"/>
</dbReference>
<dbReference type="HAMAP" id="MF_00139">
    <property type="entry name" value="PurH"/>
    <property type="match status" value="1"/>
</dbReference>
<dbReference type="InterPro" id="IPR024051">
    <property type="entry name" value="AICAR_Tfase_dup_dom_sf"/>
</dbReference>
<dbReference type="InterPro" id="IPR016193">
    <property type="entry name" value="Cytidine_deaminase-like"/>
</dbReference>
<dbReference type="InterPro" id="IPR011607">
    <property type="entry name" value="MGS-like_dom"/>
</dbReference>
<dbReference type="InterPro" id="IPR036914">
    <property type="entry name" value="MGS-like_dom_sf"/>
</dbReference>
<dbReference type="InterPro" id="IPR002695">
    <property type="entry name" value="PurH-like"/>
</dbReference>
<dbReference type="NCBIfam" id="NF002049">
    <property type="entry name" value="PRK00881.1"/>
    <property type="match status" value="1"/>
</dbReference>
<dbReference type="NCBIfam" id="TIGR00355">
    <property type="entry name" value="purH"/>
    <property type="match status" value="1"/>
</dbReference>
<dbReference type="PANTHER" id="PTHR11692:SF0">
    <property type="entry name" value="BIFUNCTIONAL PURINE BIOSYNTHESIS PROTEIN ATIC"/>
    <property type="match status" value="1"/>
</dbReference>
<dbReference type="PANTHER" id="PTHR11692">
    <property type="entry name" value="BIFUNCTIONAL PURINE BIOSYNTHESIS PROTEIN PURH"/>
    <property type="match status" value="1"/>
</dbReference>
<dbReference type="Pfam" id="PF01808">
    <property type="entry name" value="AICARFT_IMPCHas"/>
    <property type="match status" value="1"/>
</dbReference>
<dbReference type="Pfam" id="PF02142">
    <property type="entry name" value="MGS"/>
    <property type="match status" value="1"/>
</dbReference>
<dbReference type="PIRSF" id="PIRSF000414">
    <property type="entry name" value="AICARFT_IMPCHas"/>
    <property type="match status" value="1"/>
</dbReference>
<dbReference type="SMART" id="SM00798">
    <property type="entry name" value="AICARFT_IMPCHas"/>
    <property type="match status" value="1"/>
</dbReference>
<dbReference type="SMART" id="SM00851">
    <property type="entry name" value="MGS"/>
    <property type="match status" value="1"/>
</dbReference>
<dbReference type="SUPFAM" id="SSF53927">
    <property type="entry name" value="Cytidine deaminase-like"/>
    <property type="match status" value="1"/>
</dbReference>
<dbReference type="SUPFAM" id="SSF52335">
    <property type="entry name" value="Methylglyoxal synthase-like"/>
    <property type="match status" value="1"/>
</dbReference>
<dbReference type="PROSITE" id="PS51855">
    <property type="entry name" value="MGS"/>
    <property type="match status" value="1"/>
</dbReference>
<organism>
    <name type="scientific">Streptococcus pneumoniae (strain ATCC 700669 / Spain 23F-1)</name>
    <dbReference type="NCBI Taxonomy" id="561276"/>
    <lineage>
        <taxon>Bacteria</taxon>
        <taxon>Bacillati</taxon>
        <taxon>Bacillota</taxon>
        <taxon>Bacilli</taxon>
        <taxon>Lactobacillales</taxon>
        <taxon>Streptococcaceae</taxon>
        <taxon>Streptococcus</taxon>
    </lineage>
</organism>
<protein>
    <recommendedName>
        <fullName evidence="1">Bifunctional purine biosynthesis protein PurH</fullName>
    </recommendedName>
    <domain>
        <recommendedName>
            <fullName evidence="1">Phosphoribosylaminoimidazolecarboxamide formyltransferase</fullName>
            <ecNumber evidence="1">2.1.2.3</ecNumber>
        </recommendedName>
        <alternativeName>
            <fullName evidence="1">AICAR transformylase</fullName>
        </alternativeName>
    </domain>
    <domain>
        <recommendedName>
            <fullName evidence="1">IMP cyclohydrolase</fullName>
            <ecNumber evidence="1">3.5.4.10</ecNumber>
        </recommendedName>
        <alternativeName>
            <fullName evidence="1">ATIC</fullName>
        </alternativeName>
        <alternativeName>
            <fullName evidence="1">IMP synthase</fullName>
        </alternativeName>
        <alternativeName>
            <fullName evidence="1">Inosinicase</fullName>
        </alternativeName>
    </domain>
</protein>
<feature type="chain" id="PRO_1000122974" description="Bifunctional purine biosynthesis protein PurH">
    <location>
        <begin position="1"/>
        <end position="515"/>
    </location>
</feature>
<feature type="domain" description="MGS-like" evidence="2">
    <location>
        <begin position="1"/>
        <end position="145"/>
    </location>
</feature>
<reference key="1">
    <citation type="journal article" date="2009" name="J. Bacteriol.">
        <title>Role of conjugative elements in the evolution of the multidrug-resistant pandemic clone Streptococcus pneumoniae Spain23F ST81.</title>
        <authorList>
            <person name="Croucher N.J."/>
            <person name="Walker D."/>
            <person name="Romero P."/>
            <person name="Lennard N."/>
            <person name="Paterson G.K."/>
            <person name="Bason N.C."/>
            <person name="Mitchell A.M."/>
            <person name="Quail M.A."/>
            <person name="Andrew P.W."/>
            <person name="Parkhill J."/>
            <person name="Bentley S.D."/>
            <person name="Mitchell T.J."/>
        </authorList>
    </citation>
    <scope>NUCLEOTIDE SEQUENCE [LARGE SCALE GENOMIC DNA]</scope>
    <source>
        <strain>ATCC 700669 / Spain 23F-1</strain>
    </source>
</reference>
<sequence>MTKRVLISVSDKAGIVEFAQELKKLGWEIISTGGTKVALDNAGVDTIAIDDVTGFPEMMDGRVKTLHPNIHGGLLARRDLDSHLEAAKDNKIELIDLVVVNLYPFKETILKPDVTYADAVENIDIGGPSMLRSAAKNHASVTVVVDPADYAVVLDELAANGETSYETRQRLAAKVFRHTAAYDALIAEYFTAQVGESKPEKLTLTYDLKQPMRYGENPQQDADFYQKALPTDYSIASAKQLNGKELSFNNIRDADAAIRIIRDFKDSPTVVALKHMNPCGIGQADDIETAWDYAYESDPVSIFGGIVVLNREVDAATAEKMHGVFLEIIIAPSYTDEALAILINKKKNLRILALPFNAQEASEVEAEYTGVVGGLLVQNQDVVKESPADWQVVTKRQPTETEATALEFAWKAIKYVKSNGIIVTNDHMTLGVGPGQTNRVASVRLAIDQAKDRLNGAVLASDAFFPFADNVEEIAKAGIKAIIQPGGSVRDQEFIEAADKYGLTMVFTGVRHFRH</sequence>
<name>PUR9_STRPJ</name>
<accession>B8ZJN3</accession>
<gene>
    <name evidence="1" type="primary">purH</name>
    <name type="ordered locus">SPN23F00670</name>
</gene>
<evidence type="ECO:0000255" key="1">
    <source>
        <dbReference type="HAMAP-Rule" id="MF_00139"/>
    </source>
</evidence>
<evidence type="ECO:0000255" key="2">
    <source>
        <dbReference type="PROSITE-ProRule" id="PRU01202"/>
    </source>
</evidence>
<proteinExistence type="inferred from homology"/>